<organism>
    <name type="scientific">Shigella boydii serotype 18 (strain CDC 3083-94 / BS512)</name>
    <dbReference type="NCBI Taxonomy" id="344609"/>
    <lineage>
        <taxon>Bacteria</taxon>
        <taxon>Pseudomonadati</taxon>
        <taxon>Pseudomonadota</taxon>
        <taxon>Gammaproteobacteria</taxon>
        <taxon>Enterobacterales</taxon>
        <taxon>Enterobacteriaceae</taxon>
        <taxon>Shigella</taxon>
    </lineage>
</organism>
<comment type="catalytic activity">
    <reaction evidence="1">
        <text>tRNA(Arg) + L-arginine + ATP = L-arginyl-tRNA(Arg) + AMP + diphosphate</text>
        <dbReference type="Rhea" id="RHEA:20301"/>
        <dbReference type="Rhea" id="RHEA-COMP:9658"/>
        <dbReference type="Rhea" id="RHEA-COMP:9673"/>
        <dbReference type="ChEBI" id="CHEBI:30616"/>
        <dbReference type="ChEBI" id="CHEBI:32682"/>
        <dbReference type="ChEBI" id="CHEBI:33019"/>
        <dbReference type="ChEBI" id="CHEBI:78442"/>
        <dbReference type="ChEBI" id="CHEBI:78513"/>
        <dbReference type="ChEBI" id="CHEBI:456215"/>
        <dbReference type="EC" id="6.1.1.19"/>
    </reaction>
</comment>
<comment type="subunit">
    <text evidence="1">Monomer.</text>
</comment>
<comment type="subcellular location">
    <subcellularLocation>
        <location evidence="1">Cytoplasm</location>
    </subcellularLocation>
</comment>
<comment type="similarity">
    <text evidence="1">Belongs to the class-I aminoacyl-tRNA synthetase family.</text>
</comment>
<sequence>MNIQALLSEKVRQAMIAAGAPADCEPQVRQSAKVQFGDYQANGMMAVAKKLGMAPRQLAEQVLTHLDLNGIASKVEIAGPGFINIFLDPAFLAEHVQQALASDRLGVSTPEKQTIVVDYSAPNVAKEMHVGHLRSTIIGDAAVRTLEFLGHKVIRANHVGDWGTQFGMLIAWLEKQQQENAGEMELADLEGFYRDAKKHYDEDEEFAERARNYVVKLQSGDEYFREMWRKLVDITMTQNQITYDRLNVTLTRDDVMGESLYNPMLPGIVADLKAKGLAVESEGATVVFLDEFKNKEGEPMGVIIQKKDGGYLYTTTDIACAKYRYETLHADRVLYYIDSRQHQHLMQAWAIVRKAGYVPESVPLEHHMFGMMLGKDGKPFKTRAGGTVKLADLLDEALERARRLVAEKNPDMPADELEKLANAVGIGAVKYADLSKNRTTDYIFDWDNMLAFEGNTAPYMQYAYTRVLSVFRKAEINEEQLAAAPVIIREDREAQLAARLLQFEETLTVVAREGTPHVMCAYLYDLAGLFSGFYEHCPILSAENEEVRNSRLKLAQLTAKTLKLGLDTLGIETVERM</sequence>
<dbReference type="EC" id="6.1.1.19" evidence="1"/>
<dbReference type="EMBL" id="CP001063">
    <property type="protein sequence ID" value="ACD07529.1"/>
    <property type="molecule type" value="Genomic_DNA"/>
</dbReference>
<dbReference type="RefSeq" id="WP_001025342.1">
    <property type="nucleotide sequence ID" value="NC_010658.1"/>
</dbReference>
<dbReference type="SMR" id="B2U4X7"/>
<dbReference type="STRING" id="344609.SbBS512_E2169"/>
<dbReference type="KEGG" id="sbc:SbBS512_E2169"/>
<dbReference type="HOGENOM" id="CLU_006406_5_1_6"/>
<dbReference type="Proteomes" id="UP000001030">
    <property type="component" value="Chromosome"/>
</dbReference>
<dbReference type="GO" id="GO:0005737">
    <property type="term" value="C:cytoplasm"/>
    <property type="evidence" value="ECO:0007669"/>
    <property type="project" value="UniProtKB-SubCell"/>
</dbReference>
<dbReference type="GO" id="GO:0004814">
    <property type="term" value="F:arginine-tRNA ligase activity"/>
    <property type="evidence" value="ECO:0007669"/>
    <property type="project" value="UniProtKB-UniRule"/>
</dbReference>
<dbReference type="GO" id="GO:0005524">
    <property type="term" value="F:ATP binding"/>
    <property type="evidence" value="ECO:0007669"/>
    <property type="project" value="UniProtKB-UniRule"/>
</dbReference>
<dbReference type="GO" id="GO:0006420">
    <property type="term" value="P:arginyl-tRNA aminoacylation"/>
    <property type="evidence" value="ECO:0007669"/>
    <property type="project" value="UniProtKB-UniRule"/>
</dbReference>
<dbReference type="CDD" id="cd07956">
    <property type="entry name" value="Anticodon_Ia_Arg"/>
    <property type="match status" value="1"/>
</dbReference>
<dbReference type="CDD" id="cd00671">
    <property type="entry name" value="ArgRS_core"/>
    <property type="match status" value="1"/>
</dbReference>
<dbReference type="FunFam" id="1.10.730.10:FF:000001">
    <property type="entry name" value="Arginine--tRNA ligase"/>
    <property type="match status" value="1"/>
</dbReference>
<dbReference type="FunFam" id="3.30.1360.70:FF:000001">
    <property type="entry name" value="Arginine--tRNA ligase"/>
    <property type="match status" value="1"/>
</dbReference>
<dbReference type="FunFam" id="3.40.50.620:FF:000030">
    <property type="entry name" value="Arginine--tRNA ligase"/>
    <property type="match status" value="1"/>
</dbReference>
<dbReference type="Gene3D" id="3.30.1360.70">
    <property type="entry name" value="Arginyl tRNA synthetase N-terminal domain"/>
    <property type="match status" value="1"/>
</dbReference>
<dbReference type="Gene3D" id="3.40.50.620">
    <property type="entry name" value="HUPs"/>
    <property type="match status" value="1"/>
</dbReference>
<dbReference type="Gene3D" id="1.10.730.10">
    <property type="entry name" value="Isoleucyl-tRNA Synthetase, Domain 1"/>
    <property type="match status" value="1"/>
</dbReference>
<dbReference type="HAMAP" id="MF_00123">
    <property type="entry name" value="Arg_tRNA_synth"/>
    <property type="match status" value="1"/>
</dbReference>
<dbReference type="InterPro" id="IPR001412">
    <property type="entry name" value="aa-tRNA-synth_I_CS"/>
</dbReference>
<dbReference type="InterPro" id="IPR001278">
    <property type="entry name" value="Arg-tRNA-ligase"/>
</dbReference>
<dbReference type="InterPro" id="IPR005148">
    <property type="entry name" value="Arg-tRNA-synth_N"/>
</dbReference>
<dbReference type="InterPro" id="IPR036695">
    <property type="entry name" value="Arg-tRNA-synth_N_sf"/>
</dbReference>
<dbReference type="InterPro" id="IPR035684">
    <property type="entry name" value="ArgRS_core"/>
</dbReference>
<dbReference type="InterPro" id="IPR008909">
    <property type="entry name" value="DALR_anticod-bd"/>
</dbReference>
<dbReference type="InterPro" id="IPR014729">
    <property type="entry name" value="Rossmann-like_a/b/a_fold"/>
</dbReference>
<dbReference type="InterPro" id="IPR009080">
    <property type="entry name" value="tRNAsynth_Ia_anticodon-bd"/>
</dbReference>
<dbReference type="NCBIfam" id="TIGR00456">
    <property type="entry name" value="argS"/>
    <property type="match status" value="1"/>
</dbReference>
<dbReference type="PANTHER" id="PTHR11956:SF5">
    <property type="entry name" value="ARGININE--TRNA LIGASE, CYTOPLASMIC"/>
    <property type="match status" value="1"/>
</dbReference>
<dbReference type="PANTHER" id="PTHR11956">
    <property type="entry name" value="ARGINYL-TRNA SYNTHETASE"/>
    <property type="match status" value="1"/>
</dbReference>
<dbReference type="Pfam" id="PF03485">
    <property type="entry name" value="Arg_tRNA_synt_N"/>
    <property type="match status" value="1"/>
</dbReference>
<dbReference type="Pfam" id="PF05746">
    <property type="entry name" value="DALR_1"/>
    <property type="match status" value="1"/>
</dbReference>
<dbReference type="Pfam" id="PF00750">
    <property type="entry name" value="tRNA-synt_1d"/>
    <property type="match status" value="1"/>
</dbReference>
<dbReference type="PRINTS" id="PR01038">
    <property type="entry name" value="TRNASYNTHARG"/>
</dbReference>
<dbReference type="SMART" id="SM01016">
    <property type="entry name" value="Arg_tRNA_synt_N"/>
    <property type="match status" value="1"/>
</dbReference>
<dbReference type="SMART" id="SM00836">
    <property type="entry name" value="DALR_1"/>
    <property type="match status" value="1"/>
</dbReference>
<dbReference type="SUPFAM" id="SSF47323">
    <property type="entry name" value="Anticodon-binding domain of a subclass of class I aminoacyl-tRNA synthetases"/>
    <property type="match status" value="1"/>
</dbReference>
<dbReference type="SUPFAM" id="SSF55190">
    <property type="entry name" value="Arginyl-tRNA synthetase (ArgRS), N-terminal 'additional' domain"/>
    <property type="match status" value="1"/>
</dbReference>
<dbReference type="SUPFAM" id="SSF52374">
    <property type="entry name" value="Nucleotidylyl transferase"/>
    <property type="match status" value="1"/>
</dbReference>
<dbReference type="PROSITE" id="PS00178">
    <property type="entry name" value="AA_TRNA_LIGASE_I"/>
    <property type="match status" value="1"/>
</dbReference>
<protein>
    <recommendedName>
        <fullName evidence="1">Arginine--tRNA ligase</fullName>
        <ecNumber evidence="1">6.1.1.19</ecNumber>
    </recommendedName>
    <alternativeName>
        <fullName evidence="1">Arginyl-tRNA synthetase</fullName>
        <shortName evidence="1">ArgRS</shortName>
    </alternativeName>
</protein>
<evidence type="ECO:0000255" key="1">
    <source>
        <dbReference type="HAMAP-Rule" id="MF_00123"/>
    </source>
</evidence>
<name>SYR_SHIB3</name>
<reference key="1">
    <citation type="submission" date="2008-05" db="EMBL/GenBank/DDBJ databases">
        <title>Complete sequence of Shigella boydii serotype 18 strain BS512.</title>
        <authorList>
            <person name="Rasko D.A."/>
            <person name="Rosovitz M."/>
            <person name="Maurelli A.T."/>
            <person name="Myers G."/>
            <person name="Seshadri R."/>
            <person name="Cer R."/>
            <person name="Jiang L."/>
            <person name="Ravel J."/>
            <person name="Sebastian Y."/>
        </authorList>
    </citation>
    <scope>NUCLEOTIDE SEQUENCE [LARGE SCALE GENOMIC DNA]</scope>
    <source>
        <strain>CDC 3083-94 / BS512</strain>
    </source>
</reference>
<accession>B2U4X7</accession>
<gene>
    <name evidence="1" type="primary">argS</name>
    <name type="ordered locus">SbBS512_E2169</name>
</gene>
<feature type="chain" id="PRO_1000095407" description="Arginine--tRNA ligase">
    <location>
        <begin position="1"/>
        <end position="577"/>
    </location>
</feature>
<feature type="short sequence motif" description="'HIGH' region">
    <location>
        <begin position="122"/>
        <end position="132"/>
    </location>
</feature>
<proteinExistence type="inferred from homology"/>
<keyword id="KW-0030">Aminoacyl-tRNA synthetase</keyword>
<keyword id="KW-0067">ATP-binding</keyword>
<keyword id="KW-0963">Cytoplasm</keyword>
<keyword id="KW-0436">Ligase</keyword>
<keyword id="KW-0547">Nucleotide-binding</keyword>
<keyword id="KW-0648">Protein biosynthesis</keyword>
<keyword id="KW-1185">Reference proteome</keyword>